<protein>
    <recommendedName>
        <fullName evidence="1">Dihydroorotate dehydrogenase (quinone)</fullName>
        <ecNumber evidence="1">1.3.5.2</ecNumber>
    </recommendedName>
    <alternativeName>
        <fullName evidence="1">DHOdehase</fullName>
        <shortName evidence="1">DHOD</shortName>
        <shortName evidence="1">DHODase</shortName>
    </alternativeName>
    <alternativeName>
        <fullName evidence="1">Dihydroorotate oxidase</fullName>
    </alternativeName>
</protein>
<organism>
    <name type="scientific">Saccharophagus degradans (strain 2-40 / ATCC 43961 / DSM 17024)</name>
    <dbReference type="NCBI Taxonomy" id="203122"/>
    <lineage>
        <taxon>Bacteria</taxon>
        <taxon>Pseudomonadati</taxon>
        <taxon>Pseudomonadota</taxon>
        <taxon>Gammaproteobacteria</taxon>
        <taxon>Cellvibrionales</taxon>
        <taxon>Cellvibrionaceae</taxon>
        <taxon>Saccharophagus</taxon>
    </lineage>
</organism>
<keyword id="KW-1003">Cell membrane</keyword>
<keyword id="KW-0285">Flavoprotein</keyword>
<keyword id="KW-0288">FMN</keyword>
<keyword id="KW-0472">Membrane</keyword>
<keyword id="KW-0560">Oxidoreductase</keyword>
<keyword id="KW-0665">Pyrimidine biosynthesis</keyword>
<keyword id="KW-1185">Reference proteome</keyword>
<name>PYRD_SACD2</name>
<accession>Q21JW9</accession>
<sequence length="339" mass="36170">MYSFIRNCLFKLDAEVSHELSLDWLGAFERLHMLKPFALKVTPSPINVMGIDFPNRVGLAAGLDKNGDFVNALGQLGFGFVEIGTITPLAQSGNPKPRLFRLPEHQAIINRMGFNNKGVDHLVAQVQKRRYPGVLGINIGKNKITPEENALDDYVKCMDKVYAHADYITVNISSPNTPGLRNLQFGETLANLIAGIKQAQDRLAQTHDKYVPVAVKIAPDMTAEEIHSVADTLVNGNIDGVIATNTTISREAVQGHINADEAGGLSGLPVRDKSTEVIATLSAHLQGAMPIIGVGGIVEGADAQAKIAAGASLVQIYSGFIYKGPKLIAEAADAIASAG</sequence>
<proteinExistence type="inferred from homology"/>
<evidence type="ECO:0000255" key="1">
    <source>
        <dbReference type="HAMAP-Rule" id="MF_00225"/>
    </source>
</evidence>
<reference key="1">
    <citation type="journal article" date="2008" name="PLoS Genet.">
        <title>Complete genome sequence of the complex carbohydrate-degrading marine bacterium, Saccharophagus degradans strain 2-40 T.</title>
        <authorList>
            <person name="Weiner R.M."/>
            <person name="Taylor L.E. II"/>
            <person name="Henrissat B."/>
            <person name="Hauser L."/>
            <person name="Land M."/>
            <person name="Coutinho P.M."/>
            <person name="Rancurel C."/>
            <person name="Saunders E.H."/>
            <person name="Longmire A.G."/>
            <person name="Zhang H."/>
            <person name="Bayer E.A."/>
            <person name="Gilbert H.J."/>
            <person name="Larimer F."/>
            <person name="Zhulin I.B."/>
            <person name="Ekborg N.A."/>
            <person name="Lamed R."/>
            <person name="Richardson P.M."/>
            <person name="Borovok I."/>
            <person name="Hutcheson S."/>
        </authorList>
    </citation>
    <scope>NUCLEOTIDE SEQUENCE [LARGE SCALE GENOMIC DNA]</scope>
    <source>
        <strain>2-40 / ATCC 43961 / DSM 17024</strain>
    </source>
</reference>
<comment type="function">
    <text evidence="1">Catalyzes the conversion of dihydroorotate to orotate with quinone as electron acceptor.</text>
</comment>
<comment type="catalytic activity">
    <reaction evidence="1">
        <text>(S)-dihydroorotate + a quinone = orotate + a quinol</text>
        <dbReference type="Rhea" id="RHEA:30187"/>
        <dbReference type="ChEBI" id="CHEBI:24646"/>
        <dbReference type="ChEBI" id="CHEBI:30839"/>
        <dbReference type="ChEBI" id="CHEBI:30864"/>
        <dbReference type="ChEBI" id="CHEBI:132124"/>
        <dbReference type="EC" id="1.3.5.2"/>
    </reaction>
</comment>
<comment type="cofactor">
    <cofactor evidence="1">
        <name>FMN</name>
        <dbReference type="ChEBI" id="CHEBI:58210"/>
    </cofactor>
    <text evidence="1">Binds 1 FMN per subunit.</text>
</comment>
<comment type="pathway">
    <text evidence="1">Pyrimidine metabolism; UMP biosynthesis via de novo pathway; orotate from (S)-dihydroorotate (quinone route): step 1/1.</text>
</comment>
<comment type="subunit">
    <text evidence="1">Monomer.</text>
</comment>
<comment type="subcellular location">
    <subcellularLocation>
        <location evidence="1">Cell membrane</location>
        <topology evidence="1">Peripheral membrane protein</topology>
    </subcellularLocation>
</comment>
<comment type="similarity">
    <text evidence="1">Belongs to the dihydroorotate dehydrogenase family. Type 2 subfamily.</text>
</comment>
<gene>
    <name evidence="1" type="primary">pyrD</name>
    <name type="ordered locus">Sde_1750</name>
</gene>
<feature type="chain" id="PRO_0000336489" description="Dihydroorotate dehydrogenase (quinone)">
    <location>
        <begin position="1"/>
        <end position="339"/>
    </location>
</feature>
<feature type="active site" description="Nucleophile" evidence="1">
    <location>
        <position position="174"/>
    </location>
</feature>
<feature type="binding site" evidence="1">
    <location>
        <begin position="61"/>
        <end position="65"/>
    </location>
    <ligand>
        <name>FMN</name>
        <dbReference type="ChEBI" id="CHEBI:58210"/>
    </ligand>
</feature>
<feature type="binding site" evidence="1">
    <location>
        <position position="65"/>
    </location>
    <ligand>
        <name>substrate</name>
    </ligand>
</feature>
<feature type="binding site" evidence="1">
    <location>
        <position position="85"/>
    </location>
    <ligand>
        <name>FMN</name>
        <dbReference type="ChEBI" id="CHEBI:58210"/>
    </ligand>
</feature>
<feature type="binding site" evidence="1">
    <location>
        <begin position="110"/>
        <end position="114"/>
    </location>
    <ligand>
        <name>substrate</name>
    </ligand>
</feature>
<feature type="binding site" evidence="1">
    <location>
        <position position="138"/>
    </location>
    <ligand>
        <name>FMN</name>
        <dbReference type="ChEBI" id="CHEBI:58210"/>
    </ligand>
</feature>
<feature type="binding site" evidence="1">
    <location>
        <position position="171"/>
    </location>
    <ligand>
        <name>FMN</name>
        <dbReference type="ChEBI" id="CHEBI:58210"/>
    </ligand>
</feature>
<feature type="binding site" evidence="1">
    <location>
        <position position="171"/>
    </location>
    <ligand>
        <name>substrate</name>
    </ligand>
</feature>
<feature type="binding site" evidence="1">
    <location>
        <position position="176"/>
    </location>
    <ligand>
        <name>substrate</name>
    </ligand>
</feature>
<feature type="binding site" evidence="1">
    <location>
        <position position="216"/>
    </location>
    <ligand>
        <name>FMN</name>
        <dbReference type="ChEBI" id="CHEBI:58210"/>
    </ligand>
</feature>
<feature type="binding site" evidence="1">
    <location>
        <position position="244"/>
    </location>
    <ligand>
        <name>FMN</name>
        <dbReference type="ChEBI" id="CHEBI:58210"/>
    </ligand>
</feature>
<feature type="binding site" evidence="1">
    <location>
        <begin position="245"/>
        <end position="246"/>
    </location>
    <ligand>
        <name>substrate</name>
    </ligand>
</feature>
<feature type="binding site" evidence="1">
    <location>
        <position position="267"/>
    </location>
    <ligand>
        <name>FMN</name>
        <dbReference type="ChEBI" id="CHEBI:58210"/>
    </ligand>
</feature>
<feature type="binding site" evidence="1">
    <location>
        <position position="296"/>
    </location>
    <ligand>
        <name>FMN</name>
        <dbReference type="ChEBI" id="CHEBI:58210"/>
    </ligand>
</feature>
<feature type="binding site" evidence="1">
    <location>
        <begin position="317"/>
        <end position="318"/>
    </location>
    <ligand>
        <name>FMN</name>
        <dbReference type="ChEBI" id="CHEBI:58210"/>
    </ligand>
</feature>
<dbReference type="EC" id="1.3.5.2" evidence="1"/>
<dbReference type="EMBL" id="CP000282">
    <property type="protein sequence ID" value="ABD81010.1"/>
    <property type="molecule type" value="Genomic_DNA"/>
</dbReference>
<dbReference type="RefSeq" id="WP_011468230.1">
    <property type="nucleotide sequence ID" value="NC_007912.1"/>
</dbReference>
<dbReference type="SMR" id="Q21JW9"/>
<dbReference type="STRING" id="203122.Sde_1750"/>
<dbReference type="GeneID" id="98613423"/>
<dbReference type="KEGG" id="sde:Sde_1750"/>
<dbReference type="eggNOG" id="COG0167">
    <property type="taxonomic scope" value="Bacteria"/>
</dbReference>
<dbReference type="HOGENOM" id="CLU_013640_2_0_6"/>
<dbReference type="OrthoDB" id="9802377at2"/>
<dbReference type="UniPathway" id="UPA00070">
    <property type="reaction ID" value="UER00946"/>
</dbReference>
<dbReference type="Proteomes" id="UP000001947">
    <property type="component" value="Chromosome"/>
</dbReference>
<dbReference type="GO" id="GO:0005737">
    <property type="term" value="C:cytoplasm"/>
    <property type="evidence" value="ECO:0007669"/>
    <property type="project" value="InterPro"/>
</dbReference>
<dbReference type="GO" id="GO:0005886">
    <property type="term" value="C:plasma membrane"/>
    <property type="evidence" value="ECO:0007669"/>
    <property type="project" value="UniProtKB-SubCell"/>
</dbReference>
<dbReference type="GO" id="GO:0106430">
    <property type="term" value="F:dihydroorotate dehydrogenase (quinone) activity"/>
    <property type="evidence" value="ECO:0007669"/>
    <property type="project" value="UniProtKB-EC"/>
</dbReference>
<dbReference type="GO" id="GO:0006207">
    <property type="term" value="P:'de novo' pyrimidine nucleobase biosynthetic process"/>
    <property type="evidence" value="ECO:0007669"/>
    <property type="project" value="InterPro"/>
</dbReference>
<dbReference type="GO" id="GO:0044205">
    <property type="term" value="P:'de novo' UMP biosynthetic process"/>
    <property type="evidence" value="ECO:0007669"/>
    <property type="project" value="UniProtKB-UniRule"/>
</dbReference>
<dbReference type="CDD" id="cd04738">
    <property type="entry name" value="DHOD_2_like"/>
    <property type="match status" value="1"/>
</dbReference>
<dbReference type="FunFam" id="3.20.20.70:FF:000028">
    <property type="entry name" value="Dihydroorotate dehydrogenase (quinone)"/>
    <property type="match status" value="1"/>
</dbReference>
<dbReference type="Gene3D" id="3.20.20.70">
    <property type="entry name" value="Aldolase class I"/>
    <property type="match status" value="1"/>
</dbReference>
<dbReference type="HAMAP" id="MF_00225">
    <property type="entry name" value="DHO_dh_type2"/>
    <property type="match status" value="1"/>
</dbReference>
<dbReference type="InterPro" id="IPR013785">
    <property type="entry name" value="Aldolase_TIM"/>
</dbReference>
<dbReference type="InterPro" id="IPR050074">
    <property type="entry name" value="DHO_dehydrogenase"/>
</dbReference>
<dbReference type="InterPro" id="IPR012135">
    <property type="entry name" value="Dihydroorotate_DH_1_2"/>
</dbReference>
<dbReference type="InterPro" id="IPR005719">
    <property type="entry name" value="Dihydroorotate_DH_2"/>
</dbReference>
<dbReference type="InterPro" id="IPR005720">
    <property type="entry name" value="Dihydroorotate_DH_cat"/>
</dbReference>
<dbReference type="InterPro" id="IPR001295">
    <property type="entry name" value="Dihydroorotate_DH_CS"/>
</dbReference>
<dbReference type="NCBIfam" id="NF003644">
    <property type="entry name" value="PRK05286.1-1"/>
    <property type="match status" value="1"/>
</dbReference>
<dbReference type="NCBIfam" id="NF003645">
    <property type="entry name" value="PRK05286.1-2"/>
    <property type="match status" value="1"/>
</dbReference>
<dbReference type="NCBIfam" id="NF003646">
    <property type="entry name" value="PRK05286.1-4"/>
    <property type="match status" value="1"/>
</dbReference>
<dbReference type="NCBIfam" id="NF003652">
    <property type="entry name" value="PRK05286.2-5"/>
    <property type="match status" value="1"/>
</dbReference>
<dbReference type="NCBIfam" id="TIGR01036">
    <property type="entry name" value="pyrD_sub2"/>
    <property type="match status" value="1"/>
</dbReference>
<dbReference type="PANTHER" id="PTHR48109:SF4">
    <property type="entry name" value="DIHYDROOROTATE DEHYDROGENASE (QUINONE), MITOCHONDRIAL"/>
    <property type="match status" value="1"/>
</dbReference>
<dbReference type="PANTHER" id="PTHR48109">
    <property type="entry name" value="DIHYDROOROTATE DEHYDROGENASE (QUINONE), MITOCHONDRIAL-RELATED"/>
    <property type="match status" value="1"/>
</dbReference>
<dbReference type="Pfam" id="PF01180">
    <property type="entry name" value="DHO_dh"/>
    <property type="match status" value="1"/>
</dbReference>
<dbReference type="PIRSF" id="PIRSF000164">
    <property type="entry name" value="DHO_oxidase"/>
    <property type="match status" value="1"/>
</dbReference>
<dbReference type="SUPFAM" id="SSF51395">
    <property type="entry name" value="FMN-linked oxidoreductases"/>
    <property type="match status" value="1"/>
</dbReference>
<dbReference type="PROSITE" id="PS00911">
    <property type="entry name" value="DHODEHASE_1"/>
    <property type="match status" value="1"/>
</dbReference>